<name>FLIK_BUCBP</name>
<keyword id="KW-1005">Bacterial flagellum biogenesis</keyword>
<keyword id="KW-1185">Reference proteome</keyword>
<gene>
    <name type="primary">fliK</name>
    <name type="ordered locus">bbp_073</name>
</gene>
<evidence type="ECO:0000250" key="1"/>
<evidence type="ECO:0000305" key="2"/>
<sequence length="356" mass="42766">MFKIEYNVSRNSTSVRRGQFYLNAFQLKKECNNYVVSKNKNTFFRDMILKMQQTIKFKDNMKSINDDYIYLKNNYCHSYGIKNKNFCSFDYFIFSKLFIIKKTSSFSNLFVLPKISEFFVQKKCLFIGLNKSKYTNFSLGHNISSWFYDDKLCCLFSILNFLADTSLNSIFSLNRKRYYSIIYSLDRDKIFKFGKIYKLFDIFKKKFILSCDYKFWKKFVFKKMLVFLNNKTKCITFILNSKHLGSVFIYFKIINNKSIILDLVTCRNEIKKIFQSHIIYLKNVLKDCGIEVSSINVSSREEFLNAVRTNYDRKFDSKILNHYNTVISKTKSHALRFYELDKNDYQYNYNNINMYV</sequence>
<proteinExistence type="inferred from homology"/>
<accession>Q89AZ5</accession>
<dbReference type="EMBL" id="AE016826">
    <property type="protein sequence ID" value="AAO26809.1"/>
    <property type="molecule type" value="Genomic_DNA"/>
</dbReference>
<dbReference type="RefSeq" id="WP_011091210.1">
    <property type="nucleotide sequence ID" value="NC_004545.1"/>
</dbReference>
<dbReference type="SMR" id="Q89AZ5"/>
<dbReference type="STRING" id="224915.bbp_073"/>
<dbReference type="KEGG" id="bab:bbp_073"/>
<dbReference type="HOGENOM" id="CLU_777726_0_0_6"/>
<dbReference type="Proteomes" id="UP000000601">
    <property type="component" value="Chromosome"/>
</dbReference>
<dbReference type="GO" id="GO:0044781">
    <property type="term" value="P:bacterial-type flagellum organization"/>
    <property type="evidence" value="ECO:0007669"/>
    <property type="project" value="UniProtKB-KW"/>
</dbReference>
<dbReference type="Gene3D" id="3.30.750.140">
    <property type="match status" value="1"/>
</dbReference>
<dbReference type="InterPro" id="IPR021136">
    <property type="entry name" value="Flagellar_hook_control-like_C"/>
</dbReference>
<dbReference type="InterPro" id="IPR038610">
    <property type="entry name" value="FliK-like_C_sf"/>
</dbReference>
<dbReference type="Pfam" id="PF02120">
    <property type="entry name" value="Flg_hook"/>
    <property type="match status" value="1"/>
</dbReference>
<feature type="chain" id="PRO_0000180907" description="Flagellar hook-length control protein">
    <location>
        <begin position="1"/>
        <end position="356"/>
    </location>
</feature>
<reference key="1">
    <citation type="journal article" date="2003" name="Proc. Natl. Acad. Sci. U.S.A.">
        <title>Reductive genome evolution in Buchnera aphidicola.</title>
        <authorList>
            <person name="van Ham R.C.H.J."/>
            <person name="Kamerbeek J."/>
            <person name="Palacios C."/>
            <person name="Rausell C."/>
            <person name="Abascal F."/>
            <person name="Bastolla U."/>
            <person name="Fernandez J.M."/>
            <person name="Jimenez L."/>
            <person name="Postigo M."/>
            <person name="Silva F.J."/>
            <person name="Tamames J."/>
            <person name="Viguera E."/>
            <person name="Latorre A."/>
            <person name="Valencia A."/>
            <person name="Moran F."/>
            <person name="Moya A."/>
        </authorList>
    </citation>
    <scope>NUCLEOTIDE SEQUENCE [LARGE SCALE GENOMIC DNA]</scope>
    <source>
        <strain>Bp</strain>
    </source>
</reference>
<comment type="function">
    <text evidence="1">Controls the length of the flagellar hook.</text>
</comment>
<comment type="domain">
    <text>Two-domain protein with the central portion of the sequence acting as a hinge or connector between the two.</text>
</comment>
<comment type="similarity">
    <text evidence="2">Belongs to the FliK family.</text>
</comment>
<protein>
    <recommendedName>
        <fullName>Flagellar hook-length control protein</fullName>
    </recommendedName>
</protein>
<organism>
    <name type="scientific">Buchnera aphidicola subsp. Baizongia pistaciae (strain Bp)</name>
    <dbReference type="NCBI Taxonomy" id="224915"/>
    <lineage>
        <taxon>Bacteria</taxon>
        <taxon>Pseudomonadati</taxon>
        <taxon>Pseudomonadota</taxon>
        <taxon>Gammaproteobacteria</taxon>
        <taxon>Enterobacterales</taxon>
        <taxon>Erwiniaceae</taxon>
        <taxon>Buchnera</taxon>
    </lineage>
</organism>